<name>RL7_BARBK</name>
<organism>
    <name type="scientific">Bartonella bacilliformis (strain ATCC 35685 / KC583 / Herrer 020/F12,63)</name>
    <dbReference type="NCBI Taxonomy" id="360095"/>
    <lineage>
        <taxon>Bacteria</taxon>
        <taxon>Pseudomonadati</taxon>
        <taxon>Pseudomonadota</taxon>
        <taxon>Alphaproteobacteria</taxon>
        <taxon>Hyphomicrobiales</taxon>
        <taxon>Bartonellaceae</taxon>
        <taxon>Bartonella</taxon>
    </lineage>
</organism>
<feature type="chain" id="PRO_1000006961" description="Large ribosomal subunit protein bL12">
    <location>
        <begin position="1"/>
        <end position="123"/>
    </location>
</feature>
<comment type="function">
    <text evidence="1">Forms part of the ribosomal stalk which helps the ribosome interact with GTP-bound translation factors. Is thus essential for accurate translation.</text>
</comment>
<comment type="subunit">
    <text evidence="1">Homodimer. Part of the ribosomal stalk of the 50S ribosomal subunit. Forms a multimeric L10(L12)X complex, where L10 forms an elongated spine to which 2 to 4 L12 dimers bind in a sequential fashion. Binds GTP-bound translation factors.</text>
</comment>
<comment type="similarity">
    <text evidence="1">Belongs to the bacterial ribosomal protein bL12 family.</text>
</comment>
<evidence type="ECO:0000255" key="1">
    <source>
        <dbReference type="HAMAP-Rule" id="MF_00368"/>
    </source>
</evidence>
<evidence type="ECO:0000305" key="2"/>
<gene>
    <name evidence="1" type="primary">rplL</name>
    <name type="ordered locus">BARBAKC583_0570</name>
</gene>
<reference key="1">
    <citation type="submission" date="2006-12" db="EMBL/GenBank/DDBJ databases">
        <authorList>
            <person name="Hendrix L."/>
            <person name="Mohamoud Y."/>
            <person name="Radune D."/>
            <person name="Shvartsbeyn A."/>
            <person name="Daugherty S."/>
            <person name="Dodson R."/>
            <person name="Durkin A.S."/>
            <person name="Harkins D."/>
            <person name="Huot H."/>
            <person name="Kothari S.P."/>
            <person name="Madupu R."/>
            <person name="Li J."/>
            <person name="Nelson W.C."/>
            <person name="Shrivastava S."/>
            <person name="Giglio M.G."/>
            <person name="Haft D."/>
            <person name="Selengut J."/>
            <person name="Fraser-Ligget C."/>
            <person name="Seshadri R."/>
        </authorList>
    </citation>
    <scope>NUCLEOTIDE SEQUENCE [LARGE SCALE GENOMIC DNA]</scope>
    <source>
        <strain>ATCC 35685 / KC583 / Herrer 020/F12,63</strain>
    </source>
</reference>
<protein>
    <recommendedName>
        <fullName evidence="1">Large ribosomal subunit protein bL12</fullName>
    </recommendedName>
    <alternativeName>
        <fullName evidence="2">50S ribosomal protein L7/L12</fullName>
    </alternativeName>
</protein>
<keyword id="KW-0687">Ribonucleoprotein</keyword>
<keyword id="KW-0689">Ribosomal protein</keyword>
<dbReference type="EMBL" id="CP000524">
    <property type="protein sequence ID" value="ABM44614.1"/>
    <property type="molecule type" value="Genomic_DNA"/>
</dbReference>
<dbReference type="RefSeq" id="WP_005766718.1">
    <property type="nucleotide sequence ID" value="NC_008783.1"/>
</dbReference>
<dbReference type="SMR" id="A1USC7"/>
<dbReference type="STRING" id="360095.BARBAKC583_0570"/>
<dbReference type="GeneID" id="4685006"/>
<dbReference type="KEGG" id="bbk:BARBAKC583_0570"/>
<dbReference type="PATRIC" id="fig|360095.6.peg.551"/>
<dbReference type="eggNOG" id="COG0222">
    <property type="taxonomic scope" value="Bacteria"/>
</dbReference>
<dbReference type="HOGENOM" id="CLU_086499_3_0_5"/>
<dbReference type="OrthoDB" id="9811748at2"/>
<dbReference type="Proteomes" id="UP000000643">
    <property type="component" value="Chromosome"/>
</dbReference>
<dbReference type="GO" id="GO:0022625">
    <property type="term" value="C:cytosolic large ribosomal subunit"/>
    <property type="evidence" value="ECO:0007669"/>
    <property type="project" value="TreeGrafter"/>
</dbReference>
<dbReference type="GO" id="GO:0003729">
    <property type="term" value="F:mRNA binding"/>
    <property type="evidence" value="ECO:0007669"/>
    <property type="project" value="TreeGrafter"/>
</dbReference>
<dbReference type="GO" id="GO:0003735">
    <property type="term" value="F:structural constituent of ribosome"/>
    <property type="evidence" value="ECO:0007669"/>
    <property type="project" value="InterPro"/>
</dbReference>
<dbReference type="GO" id="GO:0006412">
    <property type="term" value="P:translation"/>
    <property type="evidence" value="ECO:0007669"/>
    <property type="project" value="UniProtKB-UniRule"/>
</dbReference>
<dbReference type="CDD" id="cd00387">
    <property type="entry name" value="Ribosomal_L7_L12"/>
    <property type="match status" value="1"/>
</dbReference>
<dbReference type="FunFam" id="3.30.1390.10:FF:000001">
    <property type="entry name" value="50S ribosomal protein L7/L12"/>
    <property type="match status" value="1"/>
</dbReference>
<dbReference type="Gene3D" id="3.30.1390.10">
    <property type="match status" value="1"/>
</dbReference>
<dbReference type="Gene3D" id="1.20.5.710">
    <property type="entry name" value="Single helix bin"/>
    <property type="match status" value="1"/>
</dbReference>
<dbReference type="HAMAP" id="MF_00368">
    <property type="entry name" value="Ribosomal_bL12"/>
    <property type="match status" value="1"/>
</dbReference>
<dbReference type="InterPro" id="IPR000206">
    <property type="entry name" value="Ribosomal_bL12"/>
</dbReference>
<dbReference type="InterPro" id="IPR013823">
    <property type="entry name" value="Ribosomal_bL12_C"/>
</dbReference>
<dbReference type="InterPro" id="IPR014719">
    <property type="entry name" value="Ribosomal_bL12_C/ClpS-like"/>
</dbReference>
<dbReference type="InterPro" id="IPR008932">
    <property type="entry name" value="Ribosomal_bL12_oligo"/>
</dbReference>
<dbReference type="InterPro" id="IPR036235">
    <property type="entry name" value="Ribosomal_bL12_oligo_N_sf"/>
</dbReference>
<dbReference type="NCBIfam" id="TIGR00855">
    <property type="entry name" value="L12"/>
    <property type="match status" value="1"/>
</dbReference>
<dbReference type="PANTHER" id="PTHR45987">
    <property type="entry name" value="39S RIBOSOMAL PROTEIN L12"/>
    <property type="match status" value="1"/>
</dbReference>
<dbReference type="PANTHER" id="PTHR45987:SF4">
    <property type="entry name" value="LARGE RIBOSOMAL SUBUNIT PROTEIN BL12M"/>
    <property type="match status" value="1"/>
</dbReference>
<dbReference type="Pfam" id="PF00542">
    <property type="entry name" value="Ribosomal_L12"/>
    <property type="match status" value="1"/>
</dbReference>
<dbReference type="Pfam" id="PF16320">
    <property type="entry name" value="Ribosomal_L12_N"/>
    <property type="match status" value="1"/>
</dbReference>
<dbReference type="SUPFAM" id="SSF54736">
    <property type="entry name" value="ClpS-like"/>
    <property type="match status" value="1"/>
</dbReference>
<dbReference type="SUPFAM" id="SSF48300">
    <property type="entry name" value="Ribosomal protein L7/12, oligomerisation (N-terminal) domain"/>
    <property type="match status" value="1"/>
</dbReference>
<sequence length="123" mass="12701">MADLAKIVEDLSNLTVLEAAELSKLLEEKWGVSAAAPVAVAAVGSAAAPAAEEKTEFDVVLVDGGAQKINVIKEVRALTGLGLKEAKDLVEGAPKPIKEGVSKDEAEKIKAQLEAAGAKIELK</sequence>
<accession>A1USC7</accession>
<proteinExistence type="inferred from homology"/>